<proteinExistence type="inferred from homology"/>
<keyword id="KW-0106">Calcium</keyword>
<keyword id="KW-0249">Electron transport</keyword>
<keyword id="KW-0349">Heme</keyword>
<keyword id="KW-0408">Iron</keyword>
<keyword id="KW-0479">Metal-binding</keyword>
<keyword id="KW-0560">Oxidoreductase</keyword>
<keyword id="KW-0574">Periplasm</keyword>
<keyword id="KW-0732">Signal</keyword>
<keyword id="KW-0813">Transport</keyword>
<feature type="signal peptide" evidence="1">
    <location>
        <begin position="1"/>
        <end position="26"/>
    </location>
</feature>
<feature type="chain" id="PRO_0000268973" description="Cytochrome c-552">
    <location>
        <begin position="27"/>
        <end position="478"/>
    </location>
</feature>
<feature type="binding site" description="axial binding residue" evidence="1">
    <location>
        <position position="94"/>
    </location>
    <ligand>
        <name>heme c</name>
        <dbReference type="ChEBI" id="CHEBI:61717"/>
        <label>3</label>
    </ligand>
    <ligandPart>
        <name>Fe</name>
        <dbReference type="ChEBI" id="CHEBI:18248"/>
    </ligandPart>
</feature>
<feature type="binding site" description="covalent" evidence="1">
    <location>
        <position position="122"/>
    </location>
    <ligand>
        <name>heme</name>
        <dbReference type="ChEBI" id="CHEBI:30413"/>
        <label>1</label>
    </ligand>
</feature>
<feature type="binding site" description="covalent" evidence="1">
    <location>
        <position position="125"/>
    </location>
    <ligand>
        <name>heme</name>
        <dbReference type="ChEBI" id="CHEBI:30413"/>
        <label>1</label>
    </ligand>
</feature>
<feature type="binding site" description="axial binding residue" evidence="1">
    <location>
        <position position="126"/>
    </location>
    <ligand>
        <name>heme</name>
        <dbReference type="ChEBI" id="CHEBI:30413"/>
        <label>1</label>
    </ligand>
    <ligandPart>
        <name>Fe</name>
        <dbReference type="ChEBI" id="CHEBI:18248"/>
    </ligandPart>
</feature>
<feature type="binding site" description="covalent" evidence="1">
    <location>
        <position position="160"/>
    </location>
    <ligand>
        <name>heme c</name>
        <dbReference type="ChEBI" id="CHEBI:61717"/>
        <label>2</label>
    </ligand>
</feature>
<feature type="binding site" description="covalent" evidence="1">
    <location>
        <position position="163"/>
    </location>
    <ligand>
        <name>heme c</name>
        <dbReference type="ChEBI" id="CHEBI:61717"/>
        <label>2</label>
    </ligand>
</feature>
<feature type="binding site" description="axial binding residue" evidence="1">
    <location>
        <position position="164"/>
    </location>
    <ligand>
        <name>heme c</name>
        <dbReference type="ChEBI" id="CHEBI:61717"/>
        <label>2</label>
    </ligand>
    <ligandPart>
        <name>Fe</name>
        <dbReference type="ChEBI" id="CHEBI:18248"/>
    </ligandPart>
</feature>
<feature type="binding site" description="covalent" evidence="1">
    <location>
        <position position="209"/>
    </location>
    <ligand>
        <name>heme c</name>
        <dbReference type="ChEBI" id="CHEBI:61717"/>
        <label>3</label>
    </ligand>
</feature>
<feature type="binding site" description="covalent" evidence="1">
    <location>
        <position position="212"/>
    </location>
    <ligand>
        <name>heme c</name>
        <dbReference type="ChEBI" id="CHEBI:61717"/>
        <label>3</label>
    </ligand>
</feature>
<feature type="binding site" description="axial binding residue" evidence="1">
    <location>
        <position position="213"/>
    </location>
    <ligand>
        <name>heme c</name>
        <dbReference type="ChEBI" id="CHEBI:61717"/>
        <label>3</label>
    </ligand>
    <ligandPart>
        <name>Fe</name>
        <dbReference type="ChEBI" id="CHEBI:18248"/>
    </ligandPart>
</feature>
<feature type="binding site" evidence="1">
    <location>
        <position position="215"/>
    </location>
    <ligand>
        <name>Ca(2+)</name>
        <dbReference type="ChEBI" id="CHEBI:29108"/>
    </ligand>
</feature>
<feature type="binding site" evidence="1">
    <location>
        <position position="216"/>
    </location>
    <ligand>
        <name>Ca(2+)</name>
        <dbReference type="ChEBI" id="CHEBI:29108"/>
    </ligand>
</feature>
<feature type="binding site" evidence="1">
    <location>
        <position position="216"/>
    </location>
    <ligand>
        <name>substrate</name>
    </ligand>
</feature>
<feature type="binding site" evidence="1">
    <location>
        <position position="261"/>
    </location>
    <ligand>
        <name>Ca(2+)</name>
        <dbReference type="ChEBI" id="CHEBI:29108"/>
    </ligand>
</feature>
<feature type="binding site" evidence="1">
    <location>
        <position position="263"/>
    </location>
    <ligand>
        <name>Ca(2+)</name>
        <dbReference type="ChEBI" id="CHEBI:29108"/>
    </ligand>
</feature>
<feature type="binding site" evidence="1">
    <location>
        <position position="264"/>
    </location>
    <ligand>
        <name>substrate</name>
    </ligand>
</feature>
<feature type="binding site" description="axial binding residue" evidence="1">
    <location>
        <position position="275"/>
    </location>
    <ligand>
        <name>heme c</name>
        <dbReference type="ChEBI" id="CHEBI:61717"/>
        <label>5</label>
    </ligand>
    <ligandPart>
        <name>Fe</name>
        <dbReference type="ChEBI" id="CHEBI:18248"/>
    </ligandPart>
</feature>
<feature type="binding site" description="covalent" evidence="1">
    <location>
        <position position="282"/>
    </location>
    <ligand>
        <name>heme c</name>
        <dbReference type="ChEBI" id="CHEBI:61717"/>
        <label>4</label>
    </ligand>
</feature>
<feature type="binding site" description="covalent" evidence="1">
    <location>
        <position position="285"/>
    </location>
    <ligand>
        <name>heme c</name>
        <dbReference type="ChEBI" id="CHEBI:61717"/>
        <label>4</label>
    </ligand>
</feature>
<feature type="binding site" description="axial binding residue" evidence="1">
    <location>
        <position position="286"/>
    </location>
    <ligand>
        <name>heme c</name>
        <dbReference type="ChEBI" id="CHEBI:61717"/>
        <label>4</label>
    </ligand>
    <ligandPart>
        <name>Fe</name>
        <dbReference type="ChEBI" id="CHEBI:18248"/>
    </ligandPart>
</feature>
<feature type="binding site" description="axial binding residue" evidence="1">
    <location>
        <position position="301"/>
    </location>
    <ligand>
        <name>heme c</name>
        <dbReference type="ChEBI" id="CHEBI:61717"/>
        <label>2</label>
    </ligand>
    <ligandPart>
        <name>Fe</name>
        <dbReference type="ChEBI" id="CHEBI:18248"/>
    </ligandPart>
</feature>
<feature type="binding site" description="covalent" evidence="1">
    <location>
        <position position="314"/>
    </location>
    <ligand>
        <name>heme c</name>
        <dbReference type="ChEBI" id="CHEBI:61717"/>
        <label>5</label>
    </ligand>
</feature>
<feature type="binding site" description="covalent" evidence="1">
    <location>
        <position position="317"/>
    </location>
    <ligand>
        <name>heme c</name>
        <dbReference type="ChEBI" id="CHEBI:61717"/>
        <label>5</label>
    </ligand>
</feature>
<feature type="binding site" description="axial binding residue" evidence="1">
    <location>
        <position position="318"/>
    </location>
    <ligand>
        <name>heme c</name>
        <dbReference type="ChEBI" id="CHEBI:61717"/>
        <label>5</label>
    </ligand>
    <ligandPart>
        <name>Fe</name>
        <dbReference type="ChEBI" id="CHEBI:18248"/>
    </ligandPart>
</feature>
<feature type="binding site" description="axial binding residue" evidence="1">
    <location>
        <position position="393"/>
    </location>
    <ligand>
        <name>heme c</name>
        <dbReference type="ChEBI" id="CHEBI:61717"/>
        <label>4</label>
    </ligand>
    <ligandPart>
        <name>Fe</name>
        <dbReference type="ChEBI" id="CHEBI:18248"/>
    </ligandPart>
</feature>
<accession>Q5PJ02</accession>
<reference key="1">
    <citation type="journal article" date="2004" name="Nat. Genet.">
        <title>Comparison of genome degradation in Paratyphi A and Typhi, human-restricted serovars of Salmonella enterica that cause typhoid.</title>
        <authorList>
            <person name="McClelland M."/>
            <person name="Sanderson K.E."/>
            <person name="Clifton S.W."/>
            <person name="Latreille P."/>
            <person name="Porwollik S."/>
            <person name="Sabo A."/>
            <person name="Meyer R."/>
            <person name="Bieri T."/>
            <person name="Ozersky P."/>
            <person name="McLellan M."/>
            <person name="Harkins C.R."/>
            <person name="Wang C."/>
            <person name="Nguyen C."/>
            <person name="Berghoff A."/>
            <person name="Elliott G."/>
            <person name="Kohlberg S."/>
            <person name="Strong C."/>
            <person name="Du F."/>
            <person name="Carter J."/>
            <person name="Kremizki C."/>
            <person name="Layman D."/>
            <person name="Leonard S."/>
            <person name="Sun H."/>
            <person name="Fulton L."/>
            <person name="Nash W."/>
            <person name="Miner T."/>
            <person name="Minx P."/>
            <person name="Delehaunty K."/>
            <person name="Fronick C."/>
            <person name="Magrini V."/>
            <person name="Nhan M."/>
            <person name="Warren W."/>
            <person name="Florea L."/>
            <person name="Spieth J."/>
            <person name="Wilson R.K."/>
        </authorList>
    </citation>
    <scope>NUCLEOTIDE SEQUENCE [LARGE SCALE GENOMIC DNA]</scope>
    <source>
        <strain>ATCC 9150 / SARB42</strain>
    </source>
</reference>
<protein>
    <recommendedName>
        <fullName evidence="1">Cytochrome c-552</fullName>
        <ecNumber evidence="1">1.7.2.2</ecNumber>
    </recommendedName>
    <alternativeName>
        <fullName evidence="1">Ammonia-forming cytochrome c nitrite reductase</fullName>
        <shortName evidence="1">Cytochrome c nitrite reductase</shortName>
    </alternativeName>
</protein>
<name>NRFA_SALPA</name>
<sequence>MARKTLRARRFFSLIFPFFFITSVYAEQTPVSAKTVTVEAKNETFAPQHPDQYQSWKATSEQSAREDALAEDPRLVILWAGYPFSRDYNKPRGHAYAVTDVRETLRTGAPKTAEDGPLPMACWSCKSPDVALLIQQEGEDGYFHGKWARGGPEIVNDLGCADCHNTASDDFAQGKPALTLSRPYAERAMEAISKPFDKAGRFDQQSMVCGQCHVEYYFDGKNKAVKFPWDEGMKVENMEQYYDAIAFSDWTNSLSKTPMLKAQHPEYETWSAGIHGKNNVTCIDCHMPKVQNAEGKLYTDHKIGNPFDNFAQTCANCHTQDKASLQKVVAERKQAIHDLKIKVEDQLVHAHFEAKAAWDAGATDAEMKPILNDIRHAQWRWDLAIASHGIHMHAPEEGLRMLGSAMDKAADARTKLARLLATKGITHEIPLPDISTKEKAQKAIGLNMQQINAEKQDFLKTVVPQWEDQARKNSLLSQ</sequence>
<organism>
    <name type="scientific">Salmonella paratyphi A (strain ATCC 9150 / SARB42)</name>
    <dbReference type="NCBI Taxonomy" id="295319"/>
    <lineage>
        <taxon>Bacteria</taxon>
        <taxon>Pseudomonadati</taxon>
        <taxon>Pseudomonadota</taxon>
        <taxon>Gammaproteobacteria</taxon>
        <taxon>Enterobacterales</taxon>
        <taxon>Enterobacteriaceae</taxon>
        <taxon>Salmonella</taxon>
    </lineage>
</organism>
<comment type="function">
    <text evidence="1">Catalyzes the reduction of nitrite to ammonia, consuming six electrons in the process.</text>
</comment>
<comment type="catalytic activity">
    <reaction evidence="1">
        <text>6 Fe(III)-[cytochrome c] + NH4(+) + 2 H2O = 6 Fe(II)-[cytochrome c] + nitrite + 8 H(+)</text>
        <dbReference type="Rhea" id="RHEA:13089"/>
        <dbReference type="Rhea" id="RHEA-COMP:10350"/>
        <dbReference type="Rhea" id="RHEA-COMP:14399"/>
        <dbReference type="ChEBI" id="CHEBI:15377"/>
        <dbReference type="ChEBI" id="CHEBI:15378"/>
        <dbReference type="ChEBI" id="CHEBI:16301"/>
        <dbReference type="ChEBI" id="CHEBI:28938"/>
        <dbReference type="ChEBI" id="CHEBI:29033"/>
        <dbReference type="ChEBI" id="CHEBI:29034"/>
        <dbReference type="EC" id="1.7.2.2"/>
    </reaction>
</comment>
<comment type="cofactor">
    <cofactor evidence="1">
        <name>Ca(2+)</name>
        <dbReference type="ChEBI" id="CHEBI:29108"/>
    </cofactor>
    <text evidence="1">Binds 1 Ca(2+) ion per monomer.</text>
</comment>
<comment type="cofactor">
    <cofactor evidence="1">
        <name>heme c</name>
        <dbReference type="ChEBI" id="CHEBI:61717"/>
    </cofactor>
    <text evidence="1">Binds 5 heme c groups covalently per monomer.</text>
</comment>
<comment type="pathway">
    <text evidence="1">Nitrogen metabolism; nitrate reduction (assimilation).</text>
</comment>
<comment type="subcellular location">
    <subcellularLocation>
        <location evidence="1">Periplasm</location>
    </subcellularLocation>
</comment>
<comment type="similarity">
    <text evidence="1">Belongs to the cytochrome c-552 family.</text>
</comment>
<dbReference type="EC" id="1.7.2.2" evidence="1"/>
<dbReference type="EMBL" id="CP000026">
    <property type="protein sequence ID" value="AAV79838.1"/>
    <property type="molecule type" value="Genomic_DNA"/>
</dbReference>
<dbReference type="RefSeq" id="WP_000101781.1">
    <property type="nucleotide sequence ID" value="NC_006511.1"/>
</dbReference>
<dbReference type="SMR" id="Q5PJ02"/>
<dbReference type="KEGG" id="spt:SPA4094"/>
<dbReference type="HOGENOM" id="CLU_035040_1_0_6"/>
<dbReference type="UniPathway" id="UPA00653"/>
<dbReference type="Proteomes" id="UP000008185">
    <property type="component" value="Chromosome"/>
</dbReference>
<dbReference type="GO" id="GO:0030288">
    <property type="term" value="C:outer membrane-bounded periplasmic space"/>
    <property type="evidence" value="ECO:0007669"/>
    <property type="project" value="TreeGrafter"/>
</dbReference>
<dbReference type="GO" id="GO:0005509">
    <property type="term" value="F:calcium ion binding"/>
    <property type="evidence" value="ECO:0007669"/>
    <property type="project" value="UniProtKB-UniRule"/>
</dbReference>
<dbReference type="GO" id="GO:0020037">
    <property type="term" value="F:heme binding"/>
    <property type="evidence" value="ECO:0007669"/>
    <property type="project" value="InterPro"/>
</dbReference>
<dbReference type="GO" id="GO:0005506">
    <property type="term" value="F:iron ion binding"/>
    <property type="evidence" value="ECO:0007669"/>
    <property type="project" value="UniProtKB-UniRule"/>
</dbReference>
<dbReference type="GO" id="GO:0042279">
    <property type="term" value="F:nitrite reductase (cytochrome, ammonia-forming) activity"/>
    <property type="evidence" value="ECO:0007669"/>
    <property type="project" value="UniProtKB-UniRule"/>
</dbReference>
<dbReference type="GO" id="GO:0019645">
    <property type="term" value="P:anaerobic electron transport chain"/>
    <property type="evidence" value="ECO:0007669"/>
    <property type="project" value="TreeGrafter"/>
</dbReference>
<dbReference type="GO" id="GO:0042128">
    <property type="term" value="P:nitrate assimilation"/>
    <property type="evidence" value="ECO:0007669"/>
    <property type="project" value="UniProtKB-UniRule"/>
</dbReference>
<dbReference type="CDD" id="cd00548">
    <property type="entry name" value="NrfA-like"/>
    <property type="match status" value="1"/>
</dbReference>
<dbReference type="FunFam" id="1.10.1130.10:FF:000002">
    <property type="entry name" value="Cytochrome c-552"/>
    <property type="match status" value="1"/>
</dbReference>
<dbReference type="FunFam" id="1.20.140.10:FF:000014">
    <property type="entry name" value="Cytochrome c-552"/>
    <property type="match status" value="1"/>
</dbReference>
<dbReference type="Gene3D" id="1.20.140.10">
    <property type="entry name" value="Butyryl-CoA Dehydrogenase, subunit A, domain 3"/>
    <property type="match status" value="1"/>
</dbReference>
<dbReference type="Gene3D" id="1.10.1130.10">
    <property type="entry name" value="Flavocytochrome C3, Chain A"/>
    <property type="match status" value="1"/>
</dbReference>
<dbReference type="HAMAP" id="MF_01182">
    <property type="entry name" value="Cytochrom_C552"/>
    <property type="match status" value="1"/>
</dbReference>
<dbReference type="InterPro" id="IPR003321">
    <property type="entry name" value="Cyt_c552"/>
</dbReference>
<dbReference type="InterPro" id="IPR017570">
    <property type="entry name" value="Cyt_c_NO2Rdtase_formate-dep"/>
</dbReference>
<dbReference type="InterPro" id="IPR036280">
    <property type="entry name" value="Multihaem_cyt_sf"/>
</dbReference>
<dbReference type="NCBIfam" id="TIGR03152">
    <property type="entry name" value="cyto_c552_HCOOH"/>
    <property type="match status" value="1"/>
</dbReference>
<dbReference type="NCBIfam" id="NF008339">
    <property type="entry name" value="PRK11125.1"/>
    <property type="match status" value="1"/>
</dbReference>
<dbReference type="PANTHER" id="PTHR30633:SF0">
    <property type="entry name" value="CYTOCHROME C-552"/>
    <property type="match status" value="1"/>
</dbReference>
<dbReference type="PANTHER" id="PTHR30633">
    <property type="entry name" value="CYTOCHROME C-552 RESPIRATORY NITRITE REDUCTASE"/>
    <property type="match status" value="1"/>
</dbReference>
<dbReference type="Pfam" id="PF02335">
    <property type="entry name" value="Cytochrom_C552"/>
    <property type="match status" value="1"/>
</dbReference>
<dbReference type="PIRSF" id="PIRSF000243">
    <property type="entry name" value="Cyt_c552"/>
    <property type="match status" value="1"/>
</dbReference>
<dbReference type="SUPFAM" id="SSF48695">
    <property type="entry name" value="Multiheme cytochromes"/>
    <property type="match status" value="1"/>
</dbReference>
<dbReference type="PROSITE" id="PS51008">
    <property type="entry name" value="MULTIHEME_CYTC"/>
    <property type="match status" value="1"/>
</dbReference>
<evidence type="ECO:0000255" key="1">
    <source>
        <dbReference type="HAMAP-Rule" id="MF_01182"/>
    </source>
</evidence>
<gene>
    <name evidence="1" type="primary">nrfA</name>
    <name type="ordered locus">SPA4094</name>
</gene>